<organism>
    <name type="scientific">Pseudomonas fluorescens (strain SBW25)</name>
    <dbReference type="NCBI Taxonomy" id="216595"/>
    <lineage>
        <taxon>Bacteria</taxon>
        <taxon>Pseudomonadati</taxon>
        <taxon>Pseudomonadota</taxon>
        <taxon>Gammaproteobacteria</taxon>
        <taxon>Pseudomonadales</taxon>
        <taxon>Pseudomonadaceae</taxon>
        <taxon>Pseudomonas</taxon>
    </lineage>
</organism>
<keyword id="KW-0963">Cytoplasm</keyword>
<keyword id="KW-0489">Methyltransferase</keyword>
<keyword id="KW-0949">S-adenosyl-L-methionine</keyword>
<keyword id="KW-0808">Transferase</keyword>
<dbReference type="EC" id="2.1.1.77" evidence="1"/>
<dbReference type="EMBL" id="AM181176">
    <property type="protein sequence ID" value="CAY47556.1"/>
    <property type="molecule type" value="Genomic_DNA"/>
</dbReference>
<dbReference type="SMR" id="C3K706"/>
<dbReference type="STRING" id="294.SRM1_01158"/>
<dbReference type="eggNOG" id="COG2518">
    <property type="taxonomic scope" value="Bacteria"/>
</dbReference>
<dbReference type="HOGENOM" id="CLU_055432_2_0_6"/>
<dbReference type="GO" id="GO:0005737">
    <property type="term" value="C:cytoplasm"/>
    <property type="evidence" value="ECO:0007669"/>
    <property type="project" value="UniProtKB-SubCell"/>
</dbReference>
<dbReference type="GO" id="GO:0004719">
    <property type="term" value="F:protein-L-isoaspartate (D-aspartate) O-methyltransferase activity"/>
    <property type="evidence" value="ECO:0007669"/>
    <property type="project" value="UniProtKB-UniRule"/>
</dbReference>
<dbReference type="GO" id="GO:0032259">
    <property type="term" value="P:methylation"/>
    <property type="evidence" value="ECO:0007669"/>
    <property type="project" value="UniProtKB-KW"/>
</dbReference>
<dbReference type="GO" id="GO:0036211">
    <property type="term" value="P:protein modification process"/>
    <property type="evidence" value="ECO:0007669"/>
    <property type="project" value="UniProtKB-UniRule"/>
</dbReference>
<dbReference type="GO" id="GO:0030091">
    <property type="term" value="P:protein repair"/>
    <property type="evidence" value="ECO:0007669"/>
    <property type="project" value="UniProtKB-UniRule"/>
</dbReference>
<dbReference type="CDD" id="cd02440">
    <property type="entry name" value="AdoMet_MTases"/>
    <property type="match status" value="1"/>
</dbReference>
<dbReference type="FunFam" id="3.40.50.150:FF:000010">
    <property type="entry name" value="Protein-L-isoaspartate O-methyltransferase"/>
    <property type="match status" value="1"/>
</dbReference>
<dbReference type="Gene3D" id="3.40.50.150">
    <property type="entry name" value="Vaccinia Virus protein VP39"/>
    <property type="match status" value="1"/>
</dbReference>
<dbReference type="HAMAP" id="MF_00090">
    <property type="entry name" value="PIMT"/>
    <property type="match status" value="1"/>
</dbReference>
<dbReference type="InterPro" id="IPR000682">
    <property type="entry name" value="PCMT"/>
</dbReference>
<dbReference type="InterPro" id="IPR029063">
    <property type="entry name" value="SAM-dependent_MTases_sf"/>
</dbReference>
<dbReference type="NCBIfam" id="TIGR00080">
    <property type="entry name" value="pimt"/>
    <property type="match status" value="1"/>
</dbReference>
<dbReference type="NCBIfam" id="NF001453">
    <property type="entry name" value="PRK00312.1"/>
    <property type="match status" value="1"/>
</dbReference>
<dbReference type="PANTHER" id="PTHR11579">
    <property type="entry name" value="PROTEIN-L-ISOASPARTATE O-METHYLTRANSFERASE"/>
    <property type="match status" value="1"/>
</dbReference>
<dbReference type="PANTHER" id="PTHR11579:SF0">
    <property type="entry name" value="PROTEIN-L-ISOASPARTATE(D-ASPARTATE) O-METHYLTRANSFERASE"/>
    <property type="match status" value="1"/>
</dbReference>
<dbReference type="Pfam" id="PF01135">
    <property type="entry name" value="PCMT"/>
    <property type="match status" value="1"/>
</dbReference>
<dbReference type="SUPFAM" id="SSF53335">
    <property type="entry name" value="S-adenosyl-L-methionine-dependent methyltransferases"/>
    <property type="match status" value="1"/>
</dbReference>
<dbReference type="PROSITE" id="PS01279">
    <property type="entry name" value="PCMT"/>
    <property type="match status" value="1"/>
</dbReference>
<name>PIMT_PSEFS</name>
<accession>C3K706</accession>
<reference key="1">
    <citation type="journal article" date="2009" name="Genome Biol.">
        <title>Genomic and genetic analyses of diversity and plant interactions of Pseudomonas fluorescens.</title>
        <authorList>
            <person name="Silby M.W."/>
            <person name="Cerdeno-Tarraga A.M."/>
            <person name="Vernikos G.S."/>
            <person name="Giddens S.R."/>
            <person name="Jackson R.W."/>
            <person name="Preston G.M."/>
            <person name="Zhang X.-X."/>
            <person name="Moon C.D."/>
            <person name="Gehrig S.M."/>
            <person name="Godfrey S.A.C."/>
            <person name="Knight C.G."/>
            <person name="Malone J.G."/>
            <person name="Robinson Z."/>
            <person name="Spiers A.J."/>
            <person name="Harris S."/>
            <person name="Challis G.L."/>
            <person name="Yaxley A.M."/>
            <person name="Harris D."/>
            <person name="Seeger K."/>
            <person name="Murphy L."/>
            <person name="Rutter S."/>
            <person name="Squares R."/>
            <person name="Quail M.A."/>
            <person name="Saunders E."/>
            <person name="Mavromatis K."/>
            <person name="Brettin T.S."/>
            <person name="Bentley S.D."/>
            <person name="Hothersall J."/>
            <person name="Stephens E."/>
            <person name="Thomas C.M."/>
            <person name="Parkhill J."/>
            <person name="Levy S.B."/>
            <person name="Rainey P.B."/>
            <person name="Thomson N.R."/>
        </authorList>
    </citation>
    <scope>NUCLEOTIDE SEQUENCE [LARGE SCALE GENOMIC DNA]</scope>
    <source>
        <strain>SBW25</strain>
    </source>
</reference>
<protein>
    <recommendedName>
        <fullName evidence="1">Protein-L-isoaspartate O-methyltransferase</fullName>
        <ecNumber evidence="1">2.1.1.77</ecNumber>
    </recommendedName>
    <alternativeName>
        <fullName evidence="1">L-isoaspartyl protein carboxyl methyltransferase</fullName>
    </alternativeName>
    <alternativeName>
        <fullName evidence="1">Protein L-isoaspartyl methyltransferase</fullName>
    </alternativeName>
    <alternativeName>
        <fullName evidence="1">Protein-beta-aspartate methyltransferase</fullName>
        <shortName evidence="1">PIMT</shortName>
    </alternativeName>
</protein>
<sequence>MTSQRTRERLIQRLYEEGLSNAQVLEVIRRTPRHLFVDEALAHRAYEDTALPIGHNQTISQPYMVARMSELLLAAGPLDKVLEIGTGSGYQTAVLAQLVERVFSVERIKVLQDRAKERLVELNLRNVVFRWGDGWEGWPALAPYNGIIVTAVATDVPQALLDQLAPGGRLVIPVGSGEVQQLMLIIREDEGFSRHVLGAVRFVPLLNGPLA</sequence>
<feature type="chain" id="PRO_1000202664" description="Protein-L-isoaspartate O-methyltransferase">
    <location>
        <begin position="1"/>
        <end position="211"/>
    </location>
</feature>
<feature type="active site" evidence="1">
    <location>
        <position position="60"/>
    </location>
</feature>
<gene>
    <name evidence="1" type="primary">pcm</name>
    <name type="ordered locus">PFLU_1300</name>
</gene>
<comment type="function">
    <text evidence="1">Catalyzes the methyl esterification of L-isoaspartyl residues in peptides and proteins that result from spontaneous decomposition of normal L-aspartyl and L-asparaginyl residues. It plays a role in the repair and/or degradation of damaged proteins.</text>
</comment>
<comment type="catalytic activity">
    <reaction evidence="1">
        <text>[protein]-L-isoaspartate + S-adenosyl-L-methionine = [protein]-L-isoaspartate alpha-methyl ester + S-adenosyl-L-homocysteine</text>
        <dbReference type="Rhea" id="RHEA:12705"/>
        <dbReference type="Rhea" id="RHEA-COMP:12143"/>
        <dbReference type="Rhea" id="RHEA-COMP:12144"/>
        <dbReference type="ChEBI" id="CHEBI:57856"/>
        <dbReference type="ChEBI" id="CHEBI:59789"/>
        <dbReference type="ChEBI" id="CHEBI:90596"/>
        <dbReference type="ChEBI" id="CHEBI:90598"/>
        <dbReference type="EC" id="2.1.1.77"/>
    </reaction>
</comment>
<comment type="subcellular location">
    <subcellularLocation>
        <location evidence="1">Cytoplasm</location>
    </subcellularLocation>
</comment>
<comment type="similarity">
    <text evidence="1">Belongs to the methyltransferase superfamily. L-isoaspartyl/D-aspartyl protein methyltransferase family.</text>
</comment>
<proteinExistence type="inferred from homology"/>
<evidence type="ECO:0000255" key="1">
    <source>
        <dbReference type="HAMAP-Rule" id="MF_00090"/>
    </source>
</evidence>